<dbReference type="EC" id="4.6.1.-" evidence="4"/>
<dbReference type="EMBL" id="FJ171465">
    <property type="protein sequence ID" value="ACN48961.1"/>
    <property type="molecule type" value="mRNA"/>
</dbReference>
<dbReference type="SMR" id="C0JB30"/>
<dbReference type="GO" id="GO:0005576">
    <property type="term" value="C:extracellular region"/>
    <property type="evidence" value="ECO:0007669"/>
    <property type="project" value="UniProtKB-SubCell"/>
</dbReference>
<dbReference type="GO" id="GO:0016829">
    <property type="term" value="F:lyase activity"/>
    <property type="evidence" value="ECO:0007669"/>
    <property type="project" value="UniProtKB-KW"/>
</dbReference>
<dbReference type="GO" id="GO:0046872">
    <property type="term" value="F:metal ion binding"/>
    <property type="evidence" value="ECO:0007669"/>
    <property type="project" value="UniProtKB-KW"/>
</dbReference>
<dbReference type="GO" id="GO:0008081">
    <property type="term" value="F:phosphoric diester hydrolase activity"/>
    <property type="evidence" value="ECO:0007669"/>
    <property type="project" value="InterPro"/>
</dbReference>
<dbReference type="GO" id="GO:0090729">
    <property type="term" value="F:toxin activity"/>
    <property type="evidence" value="ECO:0007669"/>
    <property type="project" value="UniProtKB-KW"/>
</dbReference>
<dbReference type="GO" id="GO:0031640">
    <property type="term" value="P:killing of cells of another organism"/>
    <property type="evidence" value="ECO:0007669"/>
    <property type="project" value="UniProtKB-KW"/>
</dbReference>
<dbReference type="GO" id="GO:0016042">
    <property type="term" value="P:lipid catabolic process"/>
    <property type="evidence" value="ECO:0007669"/>
    <property type="project" value="UniProtKB-KW"/>
</dbReference>
<dbReference type="CDD" id="cd08576">
    <property type="entry name" value="GDPD_like_SMaseD_PLD"/>
    <property type="match status" value="1"/>
</dbReference>
<dbReference type="Gene3D" id="3.20.20.190">
    <property type="entry name" value="Phosphatidylinositol (PI) phosphodiesterase"/>
    <property type="match status" value="1"/>
</dbReference>
<dbReference type="InterPro" id="IPR017946">
    <property type="entry name" value="PLC-like_Pdiesterase_TIM-brl"/>
</dbReference>
<dbReference type="Pfam" id="PF13653">
    <property type="entry name" value="GDPD_2"/>
    <property type="match status" value="1"/>
</dbReference>
<dbReference type="SUPFAM" id="SSF51695">
    <property type="entry name" value="PLC-like phosphodiesterases"/>
    <property type="match status" value="1"/>
</dbReference>
<evidence type="ECO:0000250" key="1">
    <source>
        <dbReference type="UniProtKB" id="A0A0D4WTV1"/>
    </source>
</evidence>
<evidence type="ECO:0000250" key="2">
    <source>
        <dbReference type="UniProtKB" id="A0A0D4WV12"/>
    </source>
</evidence>
<evidence type="ECO:0000250" key="3">
    <source>
        <dbReference type="UniProtKB" id="P0CE80"/>
    </source>
</evidence>
<evidence type="ECO:0000250" key="4">
    <source>
        <dbReference type="UniProtKB" id="Q4ZFU2"/>
    </source>
</evidence>
<evidence type="ECO:0000250" key="5">
    <source>
        <dbReference type="UniProtKB" id="Q8I914"/>
    </source>
</evidence>
<evidence type="ECO:0000303" key="6">
    <source>
    </source>
</evidence>
<evidence type="ECO:0000305" key="7"/>
<evidence type="ECO:0000305" key="8">
    <source>
    </source>
</evidence>
<reference key="1">
    <citation type="journal article" date="2009" name="Mol. Biol. Evol.">
        <title>Molecular evolution, functional variation, and proposed nomenclature of the gene family that includes sphingomyelinase D in sicariid spider venoms.</title>
        <authorList>
            <person name="Binford G.J."/>
            <person name="Bodner M.R."/>
            <person name="Cordes M.H."/>
            <person name="Baldwin K.L."/>
            <person name="Rynerson M.R."/>
            <person name="Burns S.N."/>
            <person name="Zobel-Thropp P.A."/>
        </authorList>
    </citation>
    <scope>NUCLEOTIDE SEQUENCE [MRNA]</scope>
    <scope>NOMENCLATURE</scope>
    <source>
        <tissue>Venom gland</tissue>
    </source>
</reference>
<accession>C0JB30</accession>
<protein>
    <recommendedName>
        <fullName evidence="6">Dermonecrotic toxin LarSicTox-alphaVII1</fullName>
        <ecNumber evidence="4">4.6.1.-</ecNumber>
    </recommendedName>
    <alternativeName>
        <fullName>Phospholipase D</fullName>
        <shortName>PLD</shortName>
    </alternativeName>
    <alternativeName>
        <fullName>Sphingomyelin phosphodiesterase D</fullName>
        <shortName>SMD</shortName>
        <shortName>SMase D</shortName>
        <shortName>Sphingomyelinase D</shortName>
    </alternativeName>
</protein>
<proteinExistence type="evidence at transcript level"/>
<name>A71_LOXAR</name>
<keyword id="KW-0204">Cytolysis</keyword>
<keyword id="KW-1061">Dermonecrotic toxin</keyword>
<keyword id="KW-1015">Disulfide bond</keyword>
<keyword id="KW-0354">Hemolysis</keyword>
<keyword id="KW-0442">Lipid degradation</keyword>
<keyword id="KW-0443">Lipid metabolism</keyword>
<keyword id="KW-0456">Lyase</keyword>
<keyword id="KW-0460">Magnesium</keyword>
<keyword id="KW-0479">Metal-binding</keyword>
<keyword id="KW-0964">Secreted</keyword>
<keyword id="KW-0800">Toxin</keyword>
<feature type="chain" id="PRO_0000392847" description="Dermonecrotic toxin LarSicTox-alphaVII1">
    <location>
        <begin position="1" status="less than"/>
        <end position="273"/>
    </location>
</feature>
<feature type="active site" evidence="5">
    <location>
        <position position="5"/>
    </location>
</feature>
<feature type="active site" description="Nucleophile" evidence="5">
    <location>
        <position position="41"/>
    </location>
</feature>
<feature type="binding site" evidence="5">
    <location>
        <position position="25"/>
    </location>
    <ligand>
        <name>Mg(2+)</name>
        <dbReference type="ChEBI" id="CHEBI:18420"/>
    </ligand>
</feature>
<feature type="binding site" evidence="5">
    <location>
        <position position="27"/>
    </location>
    <ligand>
        <name>Mg(2+)</name>
        <dbReference type="ChEBI" id="CHEBI:18420"/>
    </ligand>
</feature>
<feature type="binding site" evidence="5">
    <location>
        <position position="85"/>
    </location>
    <ligand>
        <name>Mg(2+)</name>
        <dbReference type="ChEBI" id="CHEBI:18420"/>
    </ligand>
</feature>
<feature type="disulfide bond" evidence="3">
    <location>
        <begin position="45"/>
        <end position="51"/>
    </location>
</feature>
<feature type="disulfide bond" evidence="3">
    <location>
        <begin position="47"/>
        <end position="192"/>
    </location>
</feature>
<feature type="non-terminal residue">
    <location>
        <position position="1"/>
    </location>
</feature>
<comment type="function">
    <text evidence="1 3">Dermonecrotic toxins cleave the phosphodiester linkage between the phosphate and headgroup of certain phospholipids (sphingolipid and lysolipid substrates), forming an alcohol (often choline) and a cyclic phosphate (By similarity). This toxin acts on sphingomyelin (SM) (By similarity). It may also act on ceramide phosphoethanolamine (CPE), lysophosphatidylcholine (LPC) and lysophosphatidylethanolamine (LPE), but not on lysophosphatidylserine (LPS), and lysophosphatidylglycerol (LPG) (By similarity). It acts by transphosphatidylation, releasing exclusively cyclic phosphate products as second products (By similarity). Induces dermonecrosis, hemolysis, increased vascular permeability, edema, inflammatory response, and platelet aggregation (By similarity).</text>
</comment>
<comment type="catalytic activity">
    <reaction evidence="1">
        <text>an N-(acyl)-sphingosylphosphocholine = an N-(acyl)-sphingosyl-1,3-cyclic phosphate + choline</text>
        <dbReference type="Rhea" id="RHEA:60652"/>
        <dbReference type="ChEBI" id="CHEBI:15354"/>
        <dbReference type="ChEBI" id="CHEBI:64583"/>
        <dbReference type="ChEBI" id="CHEBI:143892"/>
    </reaction>
</comment>
<comment type="catalytic activity">
    <reaction evidence="1">
        <text>an N-(acyl)-sphingosylphosphoethanolamine = an N-(acyl)-sphingosyl-1,3-cyclic phosphate + ethanolamine</text>
        <dbReference type="Rhea" id="RHEA:60648"/>
        <dbReference type="ChEBI" id="CHEBI:57603"/>
        <dbReference type="ChEBI" id="CHEBI:143891"/>
        <dbReference type="ChEBI" id="CHEBI:143892"/>
    </reaction>
</comment>
<comment type="catalytic activity">
    <reaction evidence="1">
        <text>a 1-acyl-sn-glycero-3-phosphocholine = a 1-acyl-sn-glycero-2,3-cyclic phosphate + choline</text>
        <dbReference type="Rhea" id="RHEA:60700"/>
        <dbReference type="ChEBI" id="CHEBI:15354"/>
        <dbReference type="ChEBI" id="CHEBI:58168"/>
        <dbReference type="ChEBI" id="CHEBI:143947"/>
    </reaction>
</comment>
<comment type="catalytic activity">
    <reaction evidence="1">
        <text>a 1-acyl-sn-glycero-3-phosphoethanolamine = a 1-acyl-sn-glycero-2,3-cyclic phosphate + ethanolamine</text>
        <dbReference type="Rhea" id="RHEA:60704"/>
        <dbReference type="ChEBI" id="CHEBI:57603"/>
        <dbReference type="ChEBI" id="CHEBI:64381"/>
        <dbReference type="ChEBI" id="CHEBI:143947"/>
    </reaction>
</comment>
<comment type="cofactor">
    <cofactor evidence="5">
        <name>Mg(2+)</name>
        <dbReference type="ChEBI" id="CHEBI:18420"/>
    </cofactor>
    <text evidence="5">Binds 1 Mg(2+) ion per subunit.</text>
</comment>
<comment type="subcellular location">
    <subcellularLocation>
        <location evidence="8">Secreted</location>
    </subcellularLocation>
</comment>
<comment type="tissue specificity">
    <text evidence="8">Expressed by the venom gland.</text>
</comment>
<comment type="similarity">
    <text evidence="7">Belongs to the arthropod phospholipase D family. Class II subfamily.</text>
</comment>
<comment type="caution">
    <text evidence="1 2 4">The most common activity assay for dermonecrotic toxins detects enzymatic activity by monitoring choline release from substrate. Liberation of choline from sphingomyelin (SM) or lysophosphatidylcholine (LPC) is commonly assumed to result from substrate hydrolysis, giving either ceramide-1-phosphate (C1P) or lysophosphatidic acid (LPA), respectively, as a second product. However, two studies from Lajoie and colleagues (2013 and 2015) report the observation of exclusive formation of cyclic phosphate products as second products, resulting from intramolecular transphosphatidylation. Cyclic phosphates have vastly different biological properties from their monoester counterparts, and they may be relevant to the pathology of brown spider envenomation.</text>
</comment>
<sequence>WIMGHMVNSISQIKQFVNPGANAIEIDITFDSDAKAEYTYHKVPCDCFRTCGKWEYIDEYLKAVRNATTRGNRKYLRQLVLLIFDLKTSSLNRSTAYDAGKDFAERLLEHYWNNGENGGRAYVVLSIPNVRHYKFIIGFPDALNSEGHSELMQKVGYDFSGNDDLETIRRALRYAGVKGKNHIWQSDGITNCLSRTLKRVRKAVENRDSSDGYINKVYYWTVDKYATIRDTLDAEVDGIMTNYPNRVVDVLKEKCYSSRFRLATYSDNPFETF</sequence>
<organism>
    <name type="scientific">Loxosceles arizonica</name>
    <name type="common">Arizona brown spider</name>
    <dbReference type="NCBI Taxonomy" id="196454"/>
    <lineage>
        <taxon>Eukaryota</taxon>
        <taxon>Metazoa</taxon>
        <taxon>Ecdysozoa</taxon>
        <taxon>Arthropoda</taxon>
        <taxon>Chelicerata</taxon>
        <taxon>Arachnida</taxon>
        <taxon>Araneae</taxon>
        <taxon>Araneomorphae</taxon>
        <taxon>Haplogynae</taxon>
        <taxon>Scytodoidea</taxon>
        <taxon>Sicariidae</taxon>
        <taxon>Loxosceles</taxon>
    </lineage>
</organism>